<sequence length="359" mass="40452">MKTRSSDAEGDSRGKMIAPVGEGNGGRKRKLVQSNEQKNDIQREEDGRAKRRIVQSSDQKNGKILRGIRGCVSPRCSAQTYQSRFSWYEQDIWTYISRFLDGKSLVKLGATNKWFYKIAMEDTVWRFACLRDLQVPVPFPVSSTWIKIYASAFDGSHSYLFRQKEKHIDWMRIGAFVLDSRTSLLTESLSGRLKFPREGTIERMLQSSGSCLINDIKSGIWIADLQLVRCPVCDLSTCDGTMQTLDARHIELFLSEGYKDGSWDYNLIGSHKLQKNASAACGAIFDLKHLKESSYSGILNLKSWTGESNDSQPKAVIAPHAVAVHTRLQENEGILVKYHTMKAGTDGDIVSIRISQQLL</sequence>
<accession>Q9M365</accession>
<accession>F4JFG0</accession>
<protein>
    <recommendedName>
        <fullName>Probable F-box protein At3g61730</fullName>
    </recommendedName>
    <alternativeName>
        <fullName>Protein RFM</fullName>
    </alternativeName>
    <alternativeName>
        <fullName>Reduced male fertility protein</fullName>
    </alternativeName>
</protein>
<organism>
    <name type="scientific">Arabidopsis thaliana</name>
    <name type="common">Mouse-ear cress</name>
    <dbReference type="NCBI Taxonomy" id="3702"/>
    <lineage>
        <taxon>Eukaryota</taxon>
        <taxon>Viridiplantae</taxon>
        <taxon>Streptophyta</taxon>
        <taxon>Embryophyta</taxon>
        <taxon>Tracheophyta</taxon>
        <taxon>Spermatophyta</taxon>
        <taxon>Magnoliopsida</taxon>
        <taxon>eudicotyledons</taxon>
        <taxon>Gunneridae</taxon>
        <taxon>Pentapetalae</taxon>
        <taxon>rosids</taxon>
        <taxon>malvids</taxon>
        <taxon>Brassicales</taxon>
        <taxon>Brassicaceae</taxon>
        <taxon>Camelineae</taxon>
        <taxon>Arabidopsis</taxon>
    </lineage>
</organism>
<dbReference type="EMBL" id="AL132959">
    <property type="protein sequence ID" value="CAB71103.1"/>
    <property type="status" value="ALT_SEQ"/>
    <property type="molecule type" value="Genomic_DNA"/>
</dbReference>
<dbReference type="EMBL" id="CP002686">
    <property type="protein sequence ID" value="AEE80249.2"/>
    <property type="molecule type" value="Genomic_DNA"/>
</dbReference>
<dbReference type="PIR" id="T47965">
    <property type="entry name" value="T47965"/>
</dbReference>
<dbReference type="RefSeq" id="NP_001319817.1">
    <property type="nucleotide sequence ID" value="NM_001340124.1"/>
</dbReference>
<dbReference type="STRING" id="3702.Q9M365"/>
<dbReference type="iPTMnet" id="Q9M365"/>
<dbReference type="PaxDb" id="3702-AT3G61730.1"/>
<dbReference type="EnsemblPlants" id="AT3G61730.1">
    <property type="protein sequence ID" value="AT3G61730.1"/>
    <property type="gene ID" value="AT3G61730"/>
</dbReference>
<dbReference type="GeneID" id="825346"/>
<dbReference type="Gramene" id="AT3G61730.1">
    <property type="protein sequence ID" value="AT3G61730.1"/>
    <property type="gene ID" value="AT3G61730"/>
</dbReference>
<dbReference type="KEGG" id="ath:AT3G61730"/>
<dbReference type="Araport" id="AT3G61730"/>
<dbReference type="TAIR" id="AT3G61730">
    <property type="gene designation" value="RMF"/>
</dbReference>
<dbReference type="eggNOG" id="ENOG502QV89">
    <property type="taxonomic scope" value="Eukaryota"/>
</dbReference>
<dbReference type="HOGENOM" id="CLU_051928_0_0_1"/>
<dbReference type="InParanoid" id="Q9M365"/>
<dbReference type="OMA" id="CELNTCD"/>
<dbReference type="OrthoDB" id="8062037at2759"/>
<dbReference type="PhylomeDB" id="Q9M365"/>
<dbReference type="PRO" id="PR:Q9M365"/>
<dbReference type="Proteomes" id="UP000006548">
    <property type="component" value="Chromosome 3"/>
</dbReference>
<dbReference type="ExpressionAtlas" id="Q9M365">
    <property type="expression patterns" value="baseline and differential"/>
</dbReference>
<dbReference type="GO" id="GO:0005634">
    <property type="term" value="C:nucleus"/>
    <property type="evidence" value="ECO:0007669"/>
    <property type="project" value="UniProtKB-SubCell"/>
</dbReference>
<dbReference type="FunFam" id="1.20.1280.50:FF:000175">
    <property type="entry name" value="Probable F-box protein At5g36000"/>
    <property type="match status" value="1"/>
</dbReference>
<dbReference type="Gene3D" id="1.20.1280.50">
    <property type="match status" value="1"/>
</dbReference>
<dbReference type="InterPro" id="IPR036047">
    <property type="entry name" value="F-box-like_dom_sf"/>
</dbReference>
<dbReference type="PANTHER" id="PTHR47149">
    <property type="entry name" value="F-BOX PROTEIN RMF"/>
    <property type="match status" value="1"/>
</dbReference>
<dbReference type="PANTHER" id="PTHR47149:SF1">
    <property type="entry name" value="F-BOX PROTEIN RMF"/>
    <property type="match status" value="1"/>
</dbReference>
<dbReference type="SUPFAM" id="SSF81383">
    <property type="entry name" value="F-box domain"/>
    <property type="match status" value="1"/>
</dbReference>
<gene>
    <name type="primary">RMF</name>
    <name type="ordered locus">At3g61730</name>
    <name type="ORF">F15G16.120</name>
    <name type="ORF">F21F14.11</name>
</gene>
<comment type="function">
    <text evidence="2">Regulates tapetum degeneration and pollen maturation during anther development.</text>
</comment>
<comment type="subunit">
    <text evidence="2">Interacts with SKP1A.</text>
</comment>
<comment type="subcellular location">
    <subcellularLocation>
        <location evidence="2">Nucleus</location>
    </subcellularLocation>
</comment>
<comment type="tissue specificity">
    <text evidence="2">Expressed in flower buds, developing anthers, pollen grains, siliques, rosette leaves and roots. Detected at lower levels in open flowers, stems and cauline leaves. Expressed in young seedling in the hydathodes, shoot apical meristem, root tips and lateral root primordia.</text>
</comment>
<comment type="developmental stage">
    <text evidence="2">Expressed to a high level in young floral buds, but decreases in the later floral developmental stages. Expression restricted to microspores and pollen grains at the later developmental stages of anther.</text>
</comment>
<comment type="sequence caution" evidence="3">
    <conflict type="erroneous gene model prediction">
        <sequence resource="EMBL-CDS" id="CAB71103"/>
    </conflict>
</comment>
<evidence type="ECO:0000256" key="1">
    <source>
        <dbReference type="SAM" id="MobiDB-lite"/>
    </source>
</evidence>
<evidence type="ECO:0000269" key="2">
    <source>
    </source>
</evidence>
<evidence type="ECO:0000305" key="3"/>
<feature type="chain" id="PRO_0000396046" description="Probable F-box protein At3g61730">
    <location>
        <begin position="1"/>
        <end position="359"/>
    </location>
</feature>
<feature type="domain" description="F-box; degenerate">
    <location>
        <begin position="82"/>
        <end position="128"/>
    </location>
</feature>
<feature type="region of interest" description="Disordered" evidence="1">
    <location>
        <begin position="1"/>
        <end position="60"/>
    </location>
</feature>
<feature type="compositionally biased region" description="Basic and acidic residues" evidence="1">
    <location>
        <begin position="1"/>
        <end position="14"/>
    </location>
</feature>
<feature type="compositionally biased region" description="Basic and acidic residues" evidence="1">
    <location>
        <begin position="37"/>
        <end position="48"/>
    </location>
</feature>
<feature type="mutagenesis site" description="Loss of interaction with SKP1A; when associated with S-100 and A-101." evidence="2">
    <original>I</original>
    <variation>S</variation>
    <location>
        <position position="96"/>
    </location>
</feature>
<feature type="mutagenesis site" description="Loss of interaction with SKP1A; when associated with S-96 and A-101." evidence="2">
    <original>L</original>
    <variation>S</variation>
    <location>
        <position position="100"/>
    </location>
</feature>
<feature type="mutagenesis site" description="Loss of interaction with SKP1A; when associated with S-96 and S-100." evidence="2">
    <original>D</original>
    <variation>A</variation>
    <location>
        <position position="101"/>
    </location>
</feature>
<keyword id="KW-0539">Nucleus</keyword>
<keyword id="KW-1185">Reference proteome</keyword>
<reference key="1">
    <citation type="journal article" date="2000" name="Nature">
        <title>Sequence and analysis of chromosome 3 of the plant Arabidopsis thaliana.</title>
        <authorList>
            <person name="Salanoubat M."/>
            <person name="Lemcke K."/>
            <person name="Rieger M."/>
            <person name="Ansorge W."/>
            <person name="Unseld M."/>
            <person name="Fartmann B."/>
            <person name="Valle G."/>
            <person name="Bloecker H."/>
            <person name="Perez-Alonso M."/>
            <person name="Obermaier B."/>
            <person name="Delseny M."/>
            <person name="Boutry M."/>
            <person name="Grivell L.A."/>
            <person name="Mache R."/>
            <person name="Puigdomenech P."/>
            <person name="De Simone V."/>
            <person name="Choisne N."/>
            <person name="Artiguenave F."/>
            <person name="Robert C."/>
            <person name="Brottier P."/>
            <person name="Wincker P."/>
            <person name="Cattolico L."/>
            <person name="Weissenbach J."/>
            <person name="Saurin W."/>
            <person name="Quetier F."/>
            <person name="Schaefer M."/>
            <person name="Mueller-Auer S."/>
            <person name="Gabel C."/>
            <person name="Fuchs M."/>
            <person name="Benes V."/>
            <person name="Wurmbach E."/>
            <person name="Drzonek H."/>
            <person name="Erfle H."/>
            <person name="Jordan N."/>
            <person name="Bangert S."/>
            <person name="Wiedelmann R."/>
            <person name="Kranz H."/>
            <person name="Voss H."/>
            <person name="Holland R."/>
            <person name="Brandt P."/>
            <person name="Nyakatura G."/>
            <person name="Vezzi A."/>
            <person name="D'Angelo M."/>
            <person name="Pallavicini A."/>
            <person name="Toppo S."/>
            <person name="Simionati B."/>
            <person name="Conrad A."/>
            <person name="Hornischer K."/>
            <person name="Kauer G."/>
            <person name="Loehnert T.-H."/>
            <person name="Nordsiek G."/>
            <person name="Reichelt J."/>
            <person name="Scharfe M."/>
            <person name="Schoen O."/>
            <person name="Bargues M."/>
            <person name="Terol J."/>
            <person name="Climent J."/>
            <person name="Navarro P."/>
            <person name="Collado C."/>
            <person name="Perez-Perez A."/>
            <person name="Ottenwaelder B."/>
            <person name="Duchemin D."/>
            <person name="Cooke R."/>
            <person name="Laudie M."/>
            <person name="Berger-Llauro C."/>
            <person name="Purnelle B."/>
            <person name="Masuy D."/>
            <person name="de Haan M."/>
            <person name="Maarse A.C."/>
            <person name="Alcaraz J.-P."/>
            <person name="Cottet A."/>
            <person name="Casacuberta E."/>
            <person name="Monfort A."/>
            <person name="Argiriou A."/>
            <person name="Flores M."/>
            <person name="Liguori R."/>
            <person name="Vitale D."/>
            <person name="Mannhaupt G."/>
            <person name="Haase D."/>
            <person name="Schoof H."/>
            <person name="Rudd S."/>
            <person name="Zaccaria P."/>
            <person name="Mewes H.-W."/>
            <person name="Mayer K.F.X."/>
            <person name="Kaul S."/>
            <person name="Town C.D."/>
            <person name="Koo H.L."/>
            <person name="Tallon L.J."/>
            <person name="Jenkins J."/>
            <person name="Rooney T."/>
            <person name="Rizzo M."/>
            <person name="Walts A."/>
            <person name="Utterback T."/>
            <person name="Fujii C.Y."/>
            <person name="Shea T.P."/>
            <person name="Creasy T.H."/>
            <person name="Haas B."/>
            <person name="Maiti R."/>
            <person name="Wu D."/>
            <person name="Peterson J."/>
            <person name="Van Aken S."/>
            <person name="Pai G."/>
            <person name="Militscher J."/>
            <person name="Sellers P."/>
            <person name="Gill J.E."/>
            <person name="Feldblyum T.V."/>
            <person name="Preuss D."/>
            <person name="Lin X."/>
            <person name="Nierman W.C."/>
            <person name="Salzberg S.L."/>
            <person name="White O."/>
            <person name="Venter J.C."/>
            <person name="Fraser C.M."/>
            <person name="Kaneko T."/>
            <person name="Nakamura Y."/>
            <person name="Sato S."/>
            <person name="Kato T."/>
            <person name="Asamizu E."/>
            <person name="Sasamoto S."/>
            <person name="Kimura T."/>
            <person name="Idesawa K."/>
            <person name="Kawashima K."/>
            <person name="Kishida Y."/>
            <person name="Kiyokawa C."/>
            <person name="Kohara M."/>
            <person name="Matsumoto M."/>
            <person name="Matsuno A."/>
            <person name="Muraki A."/>
            <person name="Nakayama S."/>
            <person name="Nakazaki N."/>
            <person name="Shinpo S."/>
            <person name="Takeuchi C."/>
            <person name="Wada T."/>
            <person name="Watanabe A."/>
            <person name="Yamada M."/>
            <person name="Yasuda M."/>
            <person name="Tabata S."/>
        </authorList>
    </citation>
    <scope>NUCLEOTIDE SEQUENCE [LARGE SCALE GENOMIC DNA]</scope>
    <source>
        <strain>cv. Columbia</strain>
    </source>
</reference>
<reference key="2">
    <citation type="journal article" date="2017" name="Plant J.">
        <title>Araport11: a complete reannotation of the Arabidopsis thaliana reference genome.</title>
        <authorList>
            <person name="Cheng C.Y."/>
            <person name="Krishnakumar V."/>
            <person name="Chan A.P."/>
            <person name="Thibaud-Nissen F."/>
            <person name="Schobel S."/>
            <person name="Town C.D."/>
        </authorList>
    </citation>
    <scope>GENOME REANNOTATION</scope>
    <source>
        <strain>cv. Columbia</strain>
    </source>
</reference>
<reference key="3">
    <citation type="journal article" date="2010" name="Planta">
        <title>An Arabidopsis F-box protein regulates tapetum degeneration and pollen maturation during anther development.</title>
        <authorList>
            <person name="Kim O.K."/>
            <person name="Jung J.H."/>
            <person name="Park C.M."/>
        </authorList>
    </citation>
    <scope>FUNCTION</scope>
    <scope>SUBCELLULAR LOCATION</scope>
    <scope>TISSUE SPECIFICITY</scope>
    <scope>DEVELOPMENTAL STAGE</scope>
    <scope>INTERACTION WITH SKP1A</scope>
    <scope>MUTAGENESIS OF ILE-96; LEU-100 AND ASP-101</scope>
</reference>
<proteinExistence type="evidence at protein level"/>
<name>FB331_ARATH</name>